<dbReference type="EC" id="6.3.5.-" evidence="1"/>
<dbReference type="EMBL" id="BX548174">
    <property type="protein sequence ID" value="CAE18694.1"/>
    <property type="molecule type" value="Genomic_DNA"/>
</dbReference>
<dbReference type="RefSeq" id="WP_011131874.1">
    <property type="nucleotide sequence ID" value="NC_005072.1"/>
</dbReference>
<dbReference type="SMR" id="Q7V354"/>
<dbReference type="STRING" id="59919.PMM0235"/>
<dbReference type="KEGG" id="pmm:PMM0235"/>
<dbReference type="eggNOG" id="COG0721">
    <property type="taxonomic scope" value="Bacteria"/>
</dbReference>
<dbReference type="HOGENOM" id="CLU_105899_1_2_3"/>
<dbReference type="OrthoDB" id="9813938at2"/>
<dbReference type="Proteomes" id="UP000001026">
    <property type="component" value="Chromosome"/>
</dbReference>
<dbReference type="GO" id="GO:0050566">
    <property type="term" value="F:asparaginyl-tRNA synthase (glutamine-hydrolyzing) activity"/>
    <property type="evidence" value="ECO:0007669"/>
    <property type="project" value="RHEA"/>
</dbReference>
<dbReference type="GO" id="GO:0005524">
    <property type="term" value="F:ATP binding"/>
    <property type="evidence" value="ECO:0007669"/>
    <property type="project" value="UniProtKB-KW"/>
</dbReference>
<dbReference type="GO" id="GO:0050567">
    <property type="term" value="F:glutaminyl-tRNA synthase (glutamine-hydrolyzing) activity"/>
    <property type="evidence" value="ECO:0007669"/>
    <property type="project" value="UniProtKB-UniRule"/>
</dbReference>
<dbReference type="GO" id="GO:0070681">
    <property type="term" value="P:glutaminyl-tRNAGln biosynthesis via transamidation"/>
    <property type="evidence" value="ECO:0007669"/>
    <property type="project" value="TreeGrafter"/>
</dbReference>
<dbReference type="GO" id="GO:0006450">
    <property type="term" value="P:regulation of translational fidelity"/>
    <property type="evidence" value="ECO:0007669"/>
    <property type="project" value="InterPro"/>
</dbReference>
<dbReference type="GO" id="GO:0006412">
    <property type="term" value="P:translation"/>
    <property type="evidence" value="ECO:0007669"/>
    <property type="project" value="UniProtKB-UniRule"/>
</dbReference>
<dbReference type="Gene3D" id="1.10.20.60">
    <property type="entry name" value="Glu-tRNAGln amidotransferase C subunit, N-terminal domain"/>
    <property type="match status" value="1"/>
</dbReference>
<dbReference type="HAMAP" id="MF_00122">
    <property type="entry name" value="GatC"/>
    <property type="match status" value="1"/>
</dbReference>
<dbReference type="InterPro" id="IPR036113">
    <property type="entry name" value="Asp/Glu-ADT_sf_sub_c"/>
</dbReference>
<dbReference type="InterPro" id="IPR003837">
    <property type="entry name" value="GatC"/>
</dbReference>
<dbReference type="NCBIfam" id="TIGR00135">
    <property type="entry name" value="gatC"/>
    <property type="match status" value="1"/>
</dbReference>
<dbReference type="PANTHER" id="PTHR15004">
    <property type="entry name" value="GLUTAMYL-TRNA(GLN) AMIDOTRANSFERASE SUBUNIT C, MITOCHONDRIAL"/>
    <property type="match status" value="1"/>
</dbReference>
<dbReference type="PANTHER" id="PTHR15004:SF0">
    <property type="entry name" value="GLUTAMYL-TRNA(GLN) AMIDOTRANSFERASE SUBUNIT C, MITOCHONDRIAL"/>
    <property type="match status" value="1"/>
</dbReference>
<dbReference type="Pfam" id="PF02686">
    <property type="entry name" value="GatC"/>
    <property type="match status" value="1"/>
</dbReference>
<dbReference type="SUPFAM" id="SSF141000">
    <property type="entry name" value="Glu-tRNAGln amidotransferase C subunit"/>
    <property type="match status" value="1"/>
</dbReference>
<comment type="function">
    <text evidence="1">Allows the formation of correctly charged Asn-tRNA(Asn) or Gln-tRNA(Gln) through the transamidation of misacylated Asp-tRNA(Asn) or Glu-tRNA(Gln) in organisms which lack either or both of asparaginyl-tRNA or glutaminyl-tRNA synthetases. The reaction takes place in the presence of glutamine and ATP through an activated phospho-Asp-tRNA(Asn) or phospho-Glu-tRNA(Gln).</text>
</comment>
<comment type="catalytic activity">
    <reaction evidence="1">
        <text>L-glutamyl-tRNA(Gln) + L-glutamine + ATP + H2O = L-glutaminyl-tRNA(Gln) + L-glutamate + ADP + phosphate + H(+)</text>
        <dbReference type="Rhea" id="RHEA:17521"/>
        <dbReference type="Rhea" id="RHEA-COMP:9681"/>
        <dbReference type="Rhea" id="RHEA-COMP:9684"/>
        <dbReference type="ChEBI" id="CHEBI:15377"/>
        <dbReference type="ChEBI" id="CHEBI:15378"/>
        <dbReference type="ChEBI" id="CHEBI:29985"/>
        <dbReference type="ChEBI" id="CHEBI:30616"/>
        <dbReference type="ChEBI" id="CHEBI:43474"/>
        <dbReference type="ChEBI" id="CHEBI:58359"/>
        <dbReference type="ChEBI" id="CHEBI:78520"/>
        <dbReference type="ChEBI" id="CHEBI:78521"/>
        <dbReference type="ChEBI" id="CHEBI:456216"/>
    </reaction>
</comment>
<comment type="catalytic activity">
    <reaction evidence="1">
        <text>L-aspartyl-tRNA(Asn) + L-glutamine + ATP + H2O = L-asparaginyl-tRNA(Asn) + L-glutamate + ADP + phosphate + 2 H(+)</text>
        <dbReference type="Rhea" id="RHEA:14513"/>
        <dbReference type="Rhea" id="RHEA-COMP:9674"/>
        <dbReference type="Rhea" id="RHEA-COMP:9677"/>
        <dbReference type="ChEBI" id="CHEBI:15377"/>
        <dbReference type="ChEBI" id="CHEBI:15378"/>
        <dbReference type="ChEBI" id="CHEBI:29985"/>
        <dbReference type="ChEBI" id="CHEBI:30616"/>
        <dbReference type="ChEBI" id="CHEBI:43474"/>
        <dbReference type="ChEBI" id="CHEBI:58359"/>
        <dbReference type="ChEBI" id="CHEBI:78515"/>
        <dbReference type="ChEBI" id="CHEBI:78516"/>
        <dbReference type="ChEBI" id="CHEBI:456216"/>
    </reaction>
</comment>
<comment type="subunit">
    <text evidence="1">Heterotrimer of A, B and C subunits.</text>
</comment>
<comment type="similarity">
    <text evidence="1">Belongs to the GatC family.</text>
</comment>
<accession>Q7V354</accession>
<keyword id="KW-0067">ATP-binding</keyword>
<keyword id="KW-0436">Ligase</keyword>
<keyword id="KW-0547">Nucleotide-binding</keyword>
<keyword id="KW-0648">Protein biosynthesis</keyword>
<proteinExistence type="inferred from homology"/>
<evidence type="ECO:0000255" key="1">
    <source>
        <dbReference type="HAMAP-Rule" id="MF_00122"/>
    </source>
</evidence>
<organism>
    <name type="scientific">Prochlorococcus marinus subsp. pastoris (strain CCMP1986 / NIES-2087 / MED4)</name>
    <dbReference type="NCBI Taxonomy" id="59919"/>
    <lineage>
        <taxon>Bacteria</taxon>
        <taxon>Bacillati</taxon>
        <taxon>Cyanobacteriota</taxon>
        <taxon>Cyanophyceae</taxon>
        <taxon>Synechococcales</taxon>
        <taxon>Prochlorococcaceae</taxon>
        <taxon>Prochlorococcus</taxon>
    </lineage>
</organism>
<gene>
    <name evidence="1" type="primary">gatC</name>
    <name type="ordered locus">PMM0235</name>
</gene>
<feature type="chain" id="PRO_0000105320" description="Aspartyl/glutamyl-tRNA(Asn/Gln) amidotransferase subunit C">
    <location>
        <begin position="1"/>
        <end position="97"/>
    </location>
</feature>
<protein>
    <recommendedName>
        <fullName evidence="1">Aspartyl/glutamyl-tRNA(Asn/Gln) amidotransferase subunit C</fullName>
        <shortName evidence="1">Asp/Glu-ADT subunit C</shortName>
        <ecNumber evidence="1">6.3.5.-</ecNumber>
    </recommendedName>
</protein>
<name>GATC_PROMP</name>
<reference key="1">
    <citation type="journal article" date="2003" name="Nature">
        <title>Genome divergence in two Prochlorococcus ecotypes reflects oceanic niche differentiation.</title>
        <authorList>
            <person name="Rocap G."/>
            <person name="Larimer F.W."/>
            <person name="Lamerdin J.E."/>
            <person name="Malfatti S."/>
            <person name="Chain P."/>
            <person name="Ahlgren N.A."/>
            <person name="Arellano A."/>
            <person name="Coleman M."/>
            <person name="Hauser L."/>
            <person name="Hess W.R."/>
            <person name="Johnson Z.I."/>
            <person name="Land M.L."/>
            <person name="Lindell D."/>
            <person name="Post A.F."/>
            <person name="Regala W."/>
            <person name="Shah M."/>
            <person name="Shaw S.L."/>
            <person name="Steglich C."/>
            <person name="Sullivan M.B."/>
            <person name="Ting C.S."/>
            <person name="Tolonen A."/>
            <person name="Webb E.A."/>
            <person name="Zinser E.R."/>
            <person name="Chisholm S.W."/>
        </authorList>
    </citation>
    <scope>NUCLEOTIDE SEQUENCE [LARGE SCALE GENOMIC DNA]</scope>
    <source>
        <strain>CCMP1986 / NIES-2087 / MED4</strain>
    </source>
</reference>
<sequence>MKRISSDEVKKVAQLARLELNESEINQHAEQLEKILEYIKQLEKINTEDIPCTTRAIEVVNVLRKDEKKNYENSEEILDLAPSRENKFFKVPKIINE</sequence>